<comment type="function">
    <text evidence="1">DNA-dependent RNA polymerase catalyzes the transcription of DNA into RNA using the four ribonucleoside triphosphates as substrates.</text>
</comment>
<comment type="catalytic activity">
    <reaction evidence="1">
        <text>RNA(n) + a ribonucleoside 5'-triphosphate = RNA(n+1) + diphosphate</text>
        <dbReference type="Rhea" id="RHEA:21248"/>
        <dbReference type="Rhea" id="RHEA-COMP:14527"/>
        <dbReference type="Rhea" id="RHEA-COMP:17342"/>
        <dbReference type="ChEBI" id="CHEBI:33019"/>
        <dbReference type="ChEBI" id="CHEBI:61557"/>
        <dbReference type="ChEBI" id="CHEBI:140395"/>
        <dbReference type="EC" id="2.7.7.6"/>
    </reaction>
</comment>
<comment type="cofactor">
    <cofactor evidence="1">
        <name>Zn(2+)</name>
        <dbReference type="ChEBI" id="CHEBI:29105"/>
    </cofactor>
    <text evidence="1">Binds 1 Zn(2+) ion per subunit.</text>
</comment>
<comment type="subunit">
    <text evidence="1">In plastids the minimal PEP RNA polymerase catalytic core is composed of four subunits: alpha, beta, beta', and beta''. When a (nuclear-encoded) sigma factor is associated with the core the holoenzyme is formed, which can initiate transcription.</text>
</comment>
<comment type="subcellular location">
    <subcellularLocation>
        <location evidence="1">Plastid</location>
        <location evidence="1">Chloroplast</location>
    </subcellularLocation>
</comment>
<comment type="similarity">
    <text evidence="1">Belongs to the RNA polymerase beta' chain family. RpoC2 subfamily.</text>
</comment>
<gene>
    <name evidence="1" type="primary">rpoC2</name>
</gene>
<proteinExistence type="inferred from homology"/>
<dbReference type="EC" id="2.7.7.6" evidence="1"/>
<dbReference type="EMBL" id="DQ897681">
    <property type="protein sequence ID" value="ABI17251.1"/>
    <property type="molecule type" value="Genomic_DNA"/>
</dbReference>
<dbReference type="RefSeq" id="YP_784060.1">
    <property type="nucleotide sequence ID" value="NC_008454.1"/>
</dbReference>
<dbReference type="SMR" id="Q06FX1"/>
<dbReference type="GeneID" id="4362770"/>
<dbReference type="GO" id="GO:0009507">
    <property type="term" value="C:chloroplast"/>
    <property type="evidence" value="ECO:0007669"/>
    <property type="project" value="UniProtKB-SubCell"/>
</dbReference>
<dbReference type="GO" id="GO:0000428">
    <property type="term" value="C:DNA-directed RNA polymerase complex"/>
    <property type="evidence" value="ECO:0007669"/>
    <property type="project" value="UniProtKB-KW"/>
</dbReference>
<dbReference type="GO" id="GO:0005739">
    <property type="term" value="C:mitochondrion"/>
    <property type="evidence" value="ECO:0007669"/>
    <property type="project" value="GOC"/>
</dbReference>
<dbReference type="GO" id="GO:0003677">
    <property type="term" value="F:DNA binding"/>
    <property type="evidence" value="ECO:0007669"/>
    <property type="project" value="UniProtKB-UniRule"/>
</dbReference>
<dbReference type="GO" id="GO:0003899">
    <property type="term" value="F:DNA-directed RNA polymerase activity"/>
    <property type="evidence" value="ECO:0007669"/>
    <property type="project" value="UniProtKB-UniRule"/>
</dbReference>
<dbReference type="GO" id="GO:0008270">
    <property type="term" value="F:zinc ion binding"/>
    <property type="evidence" value="ECO:0007669"/>
    <property type="project" value="UniProtKB-UniRule"/>
</dbReference>
<dbReference type="GO" id="GO:0006351">
    <property type="term" value="P:DNA-templated transcription"/>
    <property type="evidence" value="ECO:0007669"/>
    <property type="project" value="UniProtKB-UniRule"/>
</dbReference>
<dbReference type="CDD" id="cd02655">
    <property type="entry name" value="RNAP_beta'_C"/>
    <property type="match status" value="1"/>
</dbReference>
<dbReference type="Gene3D" id="1.10.132.30">
    <property type="match status" value="1"/>
</dbReference>
<dbReference type="Gene3D" id="1.10.150.390">
    <property type="match status" value="1"/>
</dbReference>
<dbReference type="Gene3D" id="1.10.1790.20">
    <property type="match status" value="1"/>
</dbReference>
<dbReference type="Gene3D" id="1.10.274.100">
    <property type="entry name" value="RNA polymerase Rpb1, domain 3"/>
    <property type="match status" value="1"/>
</dbReference>
<dbReference type="HAMAP" id="MF_01324">
    <property type="entry name" value="RNApol_bact_RpoC2"/>
    <property type="match status" value="1"/>
</dbReference>
<dbReference type="InterPro" id="IPR012756">
    <property type="entry name" value="DNA-dir_RpoC2_beta_pp"/>
</dbReference>
<dbReference type="InterPro" id="IPR050254">
    <property type="entry name" value="RNA_pol_beta''_euk"/>
</dbReference>
<dbReference type="InterPro" id="IPR042102">
    <property type="entry name" value="RNA_pol_Rpb1_3_sf"/>
</dbReference>
<dbReference type="InterPro" id="IPR007083">
    <property type="entry name" value="RNA_pol_Rpb1_4"/>
</dbReference>
<dbReference type="InterPro" id="IPR007081">
    <property type="entry name" value="RNA_pol_Rpb1_5"/>
</dbReference>
<dbReference type="InterPro" id="IPR038120">
    <property type="entry name" value="Rpb1_funnel_sf"/>
</dbReference>
<dbReference type="NCBIfam" id="TIGR02388">
    <property type="entry name" value="rpoC2_cyan"/>
    <property type="match status" value="1"/>
</dbReference>
<dbReference type="PANTHER" id="PTHR34995">
    <property type="entry name" value="DNA-DIRECTED RNA POLYMERASE SUBUNIT BETA"/>
    <property type="match status" value="1"/>
</dbReference>
<dbReference type="PANTHER" id="PTHR34995:SF1">
    <property type="entry name" value="DNA-DIRECTED RNA POLYMERASE SUBUNIT BETA"/>
    <property type="match status" value="1"/>
</dbReference>
<dbReference type="Pfam" id="PF05000">
    <property type="entry name" value="RNA_pol_Rpb1_4"/>
    <property type="match status" value="1"/>
</dbReference>
<dbReference type="Pfam" id="PF04998">
    <property type="entry name" value="RNA_pol_Rpb1_5"/>
    <property type="match status" value="2"/>
</dbReference>
<dbReference type="SUPFAM" id="SSF64484">
    <property type="entry name" value="beta and beta-prime subunits of DNA dependent RNA-polymerase"/>
    <property type="match status" value="1"/>
</dbReference>
<accession>Q06FX1</accession>
<keyword id="KW-0150">Chloroplast</keyword>
<keyword id="KW-0240">DNA-directed RNA polymerase</keyword>
<keyword id="KW-0479">Metal-binding</keyword>
<keyword id="KW-0548">Nucleotidyltransferase</keyword>
<keyword id="KW-0934">Plastid</keyword>
<keyword id="KW-0804">Transcription</keyword>
<keyword id="KW-0808">Transferase</keyword>
<keyword id="KW-0862">Zinc</keyword>
<sequence length="1376" mass="155245">MKEWPPNLAFHNKVIDGAAIKQLISRLIQRFGMLYTSHVLDQVKLLGFKQATASSISLGIDDLLTIPSKRWLVQDAQQQSFLLEKYYQYGNVHAVEKLRQSIEIWDAISAYLRQEMTPNFGMTDPLNPVHIMSFSGARGNASQVNQLIGMRGLMSDPLGQMIDLPIQSNLREGLSLTEYIISSYGARKGVVDTAIRTADAGYLTRRLVDVVQHIIVRGTDCGTTRGLSLSPQNGGVPESTQTLIGRVLAKDIYIGPRCIAVRNQDLGGGLVNRLITFKKKPIYVRTPFTCRSTSWICRFCYGRSPTSACGDLVELGEAVGIIAGQSIGEPGTQLTLRTFHTGGVFTGGTAEQVRAPFNGKIKFNEDLVHPTRTRHGQPAFLCYIDLYLTIESEDIIHSVPIPPKSFLLVQNDQYVESEQVIAEISAGTSTFAFKDRVRKHIYSDSSGEMHSNTGMYHARKFPFSNVHILPKTSHLWILLGDLCGSGPVLFSMYKDQDQMSIHSLSVQGRNTPSLSVNNDQLKHRRLSLYDKNGTGGGSIPILNYSEMTRSLSTARCNLLYPAILHENFSLLAKKRRTRFLIPFQSIQEHRRKNERILCSDISIKIPRNGLFRGNSILAYFDDPRYKIGVSGITKYGTIEVDSIVTKESFINYGGVQPKDEGKVDPLFFIPEEVHIFPETSSIMVRNNSIIGINTKITLNKRSRVGGLVRVKKIHRGIKLQIFSGDISFPRKRDKRFIPQNKDILIPPQIRKRNFNKSKKAKNWIYVQKMRPTNKNSFFLLQPVVTYEIADGINLARLFPPDLLQEIDNIQLRVGNYIRYGDGELIPGISGKNPRIQLVRTFLVLNWDQDKKDSSIEEAHASFVEVSTKGMVRDFLRIHLRKSQIAYAYMRKRNDPSGSGFPSDNELDHSNRNPFSSSYPKARVRQSLNGTIRTLLNRNKECQSLLILSSSNCFRLGPFNNVKYHNPKKESIKRDTDPLIPIRNFSGPLGTVPQIANFDVFYHLITKNRISVFHYLPPEKGKLQVIQSFLMDENGRIYKSDPYSNIFLNPFNFNWYFLQHNYHKNYPNYCEETSTIINLGQFLFETVCIAKNGPRLKSGQVFILQVGYVIIRSGKPYLAIPGATVHGHSGQIVYGGDTLVTFIYEKARSADITQGLPKVDAMFEVRSKNSISMRLKARDEYWNEYITRNLGIYWGLLIGAKLTIAQSSLSLVNEIQKVYRSQGVQIDNRHIELIVRQITSKVLISEDGMSNLFLPGELIGLLQAERTGRALEKGICYRAILVGITKASLNTQSFISEASFQQTARVLAKAALRGRIDWLKGLKENVVLGGMSPAGTGFRGLVHPSSKKYKTLSLETQRKILFDGKVRDLLFHHKRIV</sequence>
<organism>
    <name type="scientific">Pelargonium hortorum</name>
    <name type="common">Common geranium</name>
    <name type="synonym">Pelargonium inquinans x Pelargonium zonale</name>
    <dbReference type="NCBI Taxonomy" id="4031"/>
    <lineage>
        <taxon>Eukaryota</taxon>
        <taxon>Viridiplantae</taxon>
        <taxon>Streptophyta</taxon>
        <taxon>Embryophyta</taxon>
        <taxon>Tracheophyta</taxon>
        <taxon>Spermatophyta</taxon>
        <taxon>Magnoliopsida</taxon>
        <taxon>eudicotyledons</taxon>
        <taxon>Gunneridae</taxon>
        <taxon>Pentapetalae</taxon>
        <taxon>rosids</taxon>
        <taxon>malvids</taxon>
        <taxon>Geraniales</taxon>
        <taxon>Geraniaceae</taxon>
        <taxon>Pelargonium</taxon>
    </lineage>
</organism>
<name>RPOC2_PELHO</name>
<reference key="1">
    <citation type="journal article" date="2006" name="Mol. Biol. Evol.">
        <title>The complete chloroplast genome sequence of Pelargonium x hortorum: organization and evolution of the largest and most highly rearranged chloroplast genome of land plants.</title>
        <authorList>
            <person name="Chumley T.W."/>
            <person name="Palmer J.D."/>
            <person name="Mower J.P."/>
            <person name="Fourcade H.M."/>
            <person name="Calie P.J."/>
            <person name="Boore J.L."/>
            <person name="Jansen R.K."/>
        </authorList>
    </citation>
    <scope>NUCLEOTIDE SEQUENCE [LARGE SCALE GENOMIC DNA]</scope>
    <source>
        <strain>cv. Ringo White</strain>
    </source>
</reference>
<feature type="chain" id="PRO_0000277196" description="DNA-directed RNA polymerase subunit beta''">
    <location>
        <begin position="1"/>
        <end position="1376"/>
    </location>
</feature>
<feature type="region of interest" description="Disordered" evidence="2">
    <location>
        <begin position="895"/>
        <end position="919"/>
    </location>
</feature>
<feature type="binding site" evidence="1">
    <location>
        <position position="221"/>
    </location>
    <ligand>
        <name>Zn(2+)</name>
        <dbReference type="ChEBI" id="CHEBI:29105"/>
    </ligand>
</feature>
<feature type="binding site" evidence="1">
    <location>
        <position position="290"/>
    </location>
    <ligand>
        <name>Zn(2+)</name>
        <dbReference type="ChEBI" id="CHEBI:29105"/>
    </ligand>
</feature>
<feature type="binding site" evidence="1">
    <location>
        <position position="297"/>
    </location>
    <ligand>
        <name>Zn(2+)</name>
        <dbReference type="ChEBI" id="CHEBI:29105"/>
    </ligand>
</feature>
<feature type="binding site" evidence="1">
    <location>
        <position position="300"/>
    </location>
    <ligand>
        <name>Zn(2+)</name>
        <dbReference type="ChEBI" id="CHEBI:29105"/>
    </ligand>
</feature>
<geneLocation type="chloroplast"/>
<protein>
    <recommendedName>
        <fullName evidence="1">DNA-directed RNA polymerase subunit beta''</fullName>
        <ecNumber evidence="1">2.7.7.6</ecNumber>
    </recommendedName>
    <alternativeName>
        <fullName evidence="1">PEP</fullName>
    </alternativeName>
    <alternativeName>
        <fullName evidence="1">Plastid-encoded RNA polymerase subunit beta''</fullName>
        <shortName evidence="1">RNA polymerase subunit beta''</shortName>
    </alternativeName>
</protein>
<evidence type="ECO:0000255" key="1">
    <source>
        <dbReference type="HAMAP-Rule" id="MF_01324"/>
    </source>
</evidence>
<evidence type="ECO:0000256" key="2">
    <source>
        <dbReference type="SAM" id="MobiDB-lite"/>
    </source>
</evidence>